<name>MNMG_CLOP1</name>
<gene>
    <name evidence="1" type="primary">mnmG</name>
    <name evidence="1" type="synonym">gidA</name>
    <name type="ordered locus">CPF_2991</name>
</gene>
<dbReference type="EMBL" id="CP000246">
    <property type="protein sequence ID" value="ABG85062.1"/>
    <property type="molecule type" value="Genomic_DNA"/>
</dbReference>
<dbReference type="RefSeq" id="WP_003451018.1">
    <property type="nucleotide sequence ID" value="NC_008261.1"/>
</dbReference>
<dbReference type="SMR" id="Q0TLZ5"/>
<dbReference type="STRING" id="195103.CPF_2991"/>
<dbReference type="PaxDb" id="195103-CPF_2991"/>
<dbReference type="GeneID" id="93000731"/>
<dbReference type="KEGG" id="cpf:CPF_2991"/>
<dbReference type="eggNOG" id="COG0445">
    <property type="taxonomic scope" value="Bacteria"/>
</dbReference>
<dbReference type="HOGENOM" id="CLU_007831_2_2_9"/>
<dbReference type="Proteomes" id="UP000001823">
    <property type="component" value="Chromosome"/>
</dbReference>
<dbReference type="GO" id="GO:0005829">
    <property type="term" value="C:cytosol"/>
    <property type="evidence" value="ECO:0007669"/>
    <property type="project" value="TreeGrafter"/>
</dbReference>
<dbReference type="GO" id="GO:0050660">
    <property type="term" value="F:flavin adenine dinucleotide binding"/>
    <property type="evidence" value="ECO:0007669"/>
    <property type="project" value="UniProtKB-UniRule"/>
</dbReference>
<dbReference type="GO" id="GO:0030488">
    <property type="term" value="P:tRNA methylation"/>
    <property type="evidence" value="ECO:0007669"/>
    <property type="project" value="TreeGrafter"/>
</dbReference>
<dbReference type="GO" id="GO:0002098">
    <property type="term" value="P:tRNA wobble uridine modification"/>
    <property type="evidence" value="ECO:0007669"/>
    <property type="project" value="InterPro"/>
</dbReference>
<dbReference type="FunFam" id="1.10.10.1800:FF:000001">
    <property type="entry name" value="tRNA uridine 5-carboxymethylaminomethyl modification enzyme MnmG"/>
    <property type="match status" value="1"/>
</dbReference>
<dbReference type="FunFam" id="1.10.150.570:FF:000001">
    <property type="entry name" value="tRNA uridine 5-carboxymethylaminomethyl modification enzyme MnmG"/>
    <property type="match status" value="1"/>
</dbReference>
<dbReference type="FunFam" id="3.50.50.60:FF:000002">
    <property type="entry name" value="tRNA uridine 5-carboxymethylaminomethyl modification enzyme MnmG"/>
    <property type="match status" value="1"/>
</dbReference>
<dbReference type="FunFam" id="3.50.50.60:FF:000063">
    <property type="entry name" value="tRNA uridine 5-carboxymethylaminomethyl modification enzyme MnmG"/>
    <property type="match status" value="1"/>
</dbReference>
<dbReference type="Gene3D" id="3.50.50.60">
    <property type="entry name" value="FAD/NAD(P)-binding domain"/>
    <property type="match status" value="2"/>
</dbReference>
<dbReference type="Gene3D" id="1.10.150.570">
    <property type="entry name" value="GidA associated domain, C-terminal subdomain"/>
    <property type="match status" value="1"/>
</dbReference>
<dbReference type="Gene3D" id="1.10.10.1800">
    <property type="entry name" value="tRNA uridine 5-carboxymethylaminomethyl modification enzyme MnmG/GidA"/>
    <property type="match status" value="1"/>
</dbReference>
<dbReference type="HAMAP" id="MF_00129">
    <property type="entry name" value="MnmG_GidA"/>
    <property type="match status" value="1"/>
</dbReference>
<dbReference type="InterPro" id="IPR036188">
    <property type="entry name" value="FAD/NAD-bd_sf"/>
</dbReference>
<dbReference type="InterPro" id="IPR049312">
    <property type="entry name" value="GIDA_C_N"/>
</dbReference>
<dbReference type="InterPro" id="IPR004416">
    <property type="entry name" value="MnmG"/>
</dbReference>
<dbReference type="InterPro" id="IPR002218">
    <property type="entry name" value="MnmG-rel"/>
</dbReference>
<dbReference type="InterPro" id="IPR020595">
    <property type="entry name" value="MnmG-rel_CS"/>
</dbReference>
<dbReference type="InterPro" id="IPR026904">
    <property type="entry name" value="MnmG_C"/>
</dbReference>
<dbReference type="InterPro" id="IPR047001">
    <property type="entry name" value="MnmG_C_subdom"/>
</dbReference>
<dbReference type="InterPro" id="IPR044920">
    <property type="entry name" value="MnmG_C_subdom_sf"/>
</dbReference>
<dbReference type="InterPro" id="IPR040131">
    <property type="entry name" value="MnmG_N"/>
</dbReference>
<dbReference type="NCBIfam" id="TIGR00136">
    <property type="entry name" value="mnmG_gidA"/>
    <property type="match status" value="1"/>
</dbReference>
<dbReference type="PANTHER" id="PTHR11806">
    <property type="entry name" value="GLUCOSE INHIBITED DIVISION PROTEIN A"/>
    <property type="match status" value="1"/>
</dbReference>
<dbReference type="PANTHER" id="PTHR11806:SF0">
    <property type="entry name" value="PROTEIN MTO1 HOMOLOG, MITOCHONDRIAL"/>
    <property type="match status" value="1"/>
</dbReference>
<dbReference type="Pfam" id="PF01134">
    <property type="entry name" value="GIDA"/>
    <property type="match status" value="1"/>
</dbReference>
<dbReference type="Pfam" id="PF21680">
    <property type="entry name" value="GIDA_C_1st"/>
    <property type="match status" value="1"/>
</dbReference>
<dbReference type="Pfam" id="PF13932">
    <property type="entry name" value="SAM_GIDA_C"/>
    <property type="match status" value="1"/>
</dbReference>
<dbReference type="SMART" id="SM01228">
    <property type="entry name" value="GIDA_assoc_3"/>
    <property type="match status" value="1"/>
</dbReference>
<dbReference type="SUPFAM" id="SSF51905">
    <property type="entry name" value="FAD/NAD(P)-binding domain"/>
    <property type="match status" value="1"/>
</dbReference>
<dbReference type="PROSITE" id="PS01280">
    <property type="entry name" value="GIDA_1"/>
    <property type="match status" value="1"/>
</dbReference>
<dbReference type="PROSITE" id="PS01281">
    <property type="entry name" value="GIDA_2"/>
    <property type="match status" value="1"/>
</dbReference>
<proteinExistence type="inferred from homology"/>
<comment type="function">
    <text evidence="1">NAD-binding protein involved in the addition of a carboxymethylaminomethyl (cmnm) group at the wobble position (U34) of certain tRNAs, forming tRNA-cmnm(5)s(2)U34.</text>
</comment>
<comment type="cofactor">
    <cofactor evidence="1">
        <name>FAD</name>
        <dbReference type="ChEBI" id="CHEBI:57692"/>
    </cofactor>
</comment>
<comment type="subunit">
    <text evidence="1">Homodimer. Heterotetramer of two MnmE and two MnmG subunits.</text>
</comment>
<comment type="subcellular location">
    <subcellularLocation>
        <location evidence="1">Cytoplasm</location>
    </subcellularLocation>
</comment>
<comment type="similarity">
    <text evidence="1">Belongs to the MnmG family.</text>
</comment>
<protein>
    <recommendedName>
        <fullName evidence="1">tRNA uridine 5-carboxymethylaminomethyl modification enzyme MnmG</fullName>
    </recommendedName>
    <alternativeName>
        <fullName evidence="1">Glucose-inhibited division protein A</fullName>
    </alternativeName>
</protein>
<reference key="1">
    <citation type="journal article" date="2006" name="Genome Res.">
        <title>Skewed genomic variability in strains of the toxigenic bacterial pathogen, Clostridium perfringens.</title>
        <authorList>
            <person name="Myers G.S.A."/>
            <person name="Rasko D.A."/>
            <person name="Cheung J.K."/>
            <person name="Ravel J."/>
            <person name="Seshadri R."/>
            <person name="DeBoy R.T."/>
            <person name="Ren Q."/>
            <person name="Varga J."/>
            <person name="Awad M.M."/>
            <person name="Brinkac L.M."/>
            <person name="Daugherty S.C."/>
            <person name="Haft D.H."/>
            <person name="Dodson R.J."/>
            <person name="Madupu R."/>
            <person name="Nelson W.C."/>
            <person name="Rosovitz M.J."/>
            <person name="Sullivan S.A."/>
            <person name="Khouri H."/>
            <person name="Dimitrov G.I."/>
            <person name="Watkins K.L."/>
            <person name="Mulligan S."/>
            <person name="Benton J."/>
            <person name="Radune D."/>
            <person name="Fisher D.J."/>
            <person name="Atkins H.S."/>
            <person name="Hiscox T."/>
            <person name="Jost B.H."/>
            <person name="Billington S.J."/>
            <person name="Songer J.G."/>
            <person name="McClane B.A."/>
            <person name="Titball R.W."/>
            <person name="Rood J.I."/>
            <person name="Melville S.B."/>
            <person name="Paulsen I.T."/>
        </authorList>
    </citation>
    <scope>NUCLEOTIDE SEQUENCE [LARGE SCALE GENOMIC DNA]</scope>
    <source>
        <strain>ATCC 13124 / DSM 756 / JCM 1290 / NCIMB 6125 / NCTC 8237 / S 107 / Type A</strain>
    </source>
</reference>
<feature type="chain" id="PRO_1000016585" description="tRNA uridine 5-carboxymethylaminomethyl modification enzyme MnmG">
    <location>
        <begin position="1"/>
        <end position="630"/>
    </location>
</feature>
<feature type="binding site" evidence="1">
    <location>
        <begin position="14"/>
        <end position="19"/>
    </location>
    <ligand>
        <name>FAD</name>
        <dbReference type="ChEBI" id="CHEBI:57692"/>
    </ligand>
</feature>
<feature type="binding site" evidence="1">
    <location>
        <begin position="273"/>
        <end position="287"/>
    </location>
    <ligand>
        <name>NAD(+)</name>
        <dbReference type="ChEBI" id="CHEBI:57540"/>
    </ligand>
</feature>
<organism>
    <name type="scientific">Clostridium perfringens (strain ATCC 13124 / DSM 756 / JCM 1290 / NCIMB 6125 / NCTC 8237 / Type A)</name>
    <dbReference type="NCBI Taxonomy" id="195103"/>
    <lineage>
        <taxon>Bacteria</taxon>
        <taxon>Bacillati</taxon>
        <taxon>Bacillota</taxon>
        <taxon>Clostridia</taxon>
        <taxon>Eubacteriales</taxon>
        <taxon>Clostridiaceae</taxon>
        <taxon>Clostridium</taxon>
    </lineage>
</organism>
<accession>Q0TLZ5</accession>
<sequence length="630" mass="70597">MRYNAGSYDIVVIGAGHAGCEAGLAAARMGCKTLVCTLTLDSVAMMPCNPNIGGTAKGHLVREIDALGGEMGVNIDHTFIQSKMLNTSKGPAVHSLRAQADKKKYQERMKKVLETQENLHLRQLEVVSVEVEDGKVKGVLTKNGAFFECKAVIMTSGTYLQSRIIIGDVSYSQGPNGLSNANELSKSLIDLGIDLRRFKTGTPARINKRSVDFSKMIEQPGDEEIIPFSFISGNIDRDQVSCWLTYTNEETHKVIQENIHRSPMYNGSIKGVGPRYCPSIEDKVMRFQDKDRHQIFIEPEGDDTEEMYVGGMSSSLPEDVQVQMIKTVPGLENAEIMRTAYAIEYDCIDPTQLKASLEFKNIDGFFSAGQINGSSGYEEAGAQGIVAGINAALKVQGKDPMILTRSDGYVGVLIDDLITKGTNEPYRMMTSRAEYRLLLRQDNADFRLTEIGHNVGLVTEERWSKFQERKQNLERELERLKELQITNKTENNEKIVELGSTELKKPIRMYELIKRPELDYFSLACLDPERPDLPKDIGDQINIIARYEGYIQTQLEQVAQFKKFEKKVLPEDLDYNDVNSLRIEAIQKLNKIRPLNIGQASRISGVSPADISVLLIFLEHYRKTGKNTDN</sequence>
<keyword id="KW-0963">Cytoplasm</keyword>
<keyword id="KW-0274">FAD</keyword>
<keyword id="KW-0285">Flavoprotein</keyword>
<keyword id="KW-0520">NAD</keyword>
<keyword id="KW-0819">tRNA processing</keyword>
<evidence type="ECO:0000255" key="1">
    <source>
        <dbReference type="HAMAP-Rule" id="MF_00129"/>
    </source>
</evidence>